<comment type="function">
    <text evidence="1">Part of the Tol-Pal system, which plays a role in outer membrane invagination during cell division and is important for maintaining outer membrane integrity.</text>
</comment>
<comment type="subunit">
    <text evidence="1">The Tol-Pal system is composed of five core proteins: the inner membrane proteins TolA, TolQ and TolR, the periplasmic protein TolB and the outer membrane protein Pal. They form a network linking the inner and outer membranes and the peptidoglycan layer.</text>
</comment>
<comment type="subcellular location">
    <subcellularLocation>
        <location evidence="1">Periplasm</location>
    </subcellularLocation>
</comment>
<comment type="similarity">
    <text evidence="1">Belongs to the TolB family.</text>
</comment>
<gene>
    <name evidence="1" type="primary">tolB</name>
    <name type="ordered locus">WS0521</name>
</gene>
<sequence length="421" mass="47680">MRILVFLWLGLSSLFAVDATLEVVKKFANMPSIIVEDSSTREVERGLTLRVYKMLVGDLKVSSHFNVQEGGASSFDMVMDYGAYRQKKVDLVAKVKAGREGSGILAELRLYDVNSGDSVFAKSYTVAREDRYPFVAHKMAIDINNYIKAPSIDWMNRFVVLSKYTAPSESQIVVADYTLTFQNVIIKDGRLNIFPKWANEQQDAIYYTKYLTKPTLFRYNLYTGESRKITESEGMLVASDVSADGKKLLLTMAPHTQSDIFLFDTQTGTRKQLTRYPGIDVSAHFIEDERRIMFISDRLGYPNVFATGLDGSETVEQMVFHGRNNNAASAFGQYIVYSSRESSNEFDTNTFNLYLVSTKSDYIRRLTANGVNQMPRFSQDGETVMYLKHNGAQSALGVIRLNYNKSYLFPLPSGKIQSMDW</sequence>
<protein>
    <recommendedName>
        <fullName evidence="1">Tol-Pal system protein TolB</fullName>
    </recommendedName>
</protein>
<evidence type="ECO:0000255" key="1">
    <source>
        <dbReference type="HAMAP-Rule" id="MF_00671"/>
    </source>
</evidence>
<accession>Q7MA16</accession>
<reference key="1">
    <citation type="journal article" date="2003" name="Proc. Natl. Acad. Sci. U.S.A.">
        <title>Complete genome sequence and analysis of Wolinella succinogenes.</title>
        <authorList>
            <person name="Baar C."/>
            <person name="Eppinger M."/>
            <person name="Raddatz G."/>
            <person name="Simon J."/>
            <person name="Lanz C."/>
            <person name="Klimmek O."/>
            <person name="Nandakumar R."/>
            <person name="Gross R."/>
            <person name="Rosinus A."/>
            <person name="Keller H."/>
            <person name="Jagtap P."/>
            <person name="Linke B."/>
            <person name="Meyer F."/>
            <person name="Lederer H."/>
            <person name="Schuster S.C."/>
        </authorList>
    </citation>
    <scope>NUCLEOTIDE SEQUENCE [LARGE SCALE GENOMIC DNA]</scope>
    <source>
        <strain>ATCC 29543 / DSM 1740 / CCUG 13145 / JCM 31913 / LMG 7466 / NCTC 11488 / FDC 602W</strain>
    </source>
</reference>
<organism>
    <name type="scientific">Wolinella succinogenes (strain ATCC 29543 / DSM 1740 / CCUG 13145 / JCM 31913 / LMG 7466 / NCTC 11488 / FDC 602W)</name>
    <name type="common">Vibrio succinogenes</name>
    <dbReference type="NCBI Taxonomy" id="273121"/>
    <lineage>
        <taxon>Bacteria</taxon>
        <taxon>Pseudomonadati</taxon>
        <taxon>Campylobacterota</taxon>
        <taxon>Epsilonproteobacteria</taxon>
        <taxon>Campylobacterales</taxon>
        <taxon>Helicobacteraceae</taxon>
        <taxon>Wolinella</taxon>
    </lineage>
</organism>
<dbReference type="EMBL" id="BX571658">
    <property type="protein sequence ID" value="CAE09658.1"/>
    <property type="molecule type" value="Genomic_DNA"/>
</dbReference>
<dbReference type="RefSeq" id="WP_011138458.1">
    <property type="nucleotide sequence ID" value="NC_005090.1"/>
</dbReference>
<dbReference type="SMR" id="Q7MA16"/>
<dbReference type="STRING" id="273121.WS0521"/>
<dbReference type="KEGG" id="wsu:WS0521"/>
<dbReference type="eggNOG" id="COG0823">
    <property type="taxonomic scope" value="Bacteria"/>
</dbReference>
<dbReference type="HOGENOM" id="CLU_665280_0_0_7"/>
<dbReference type="Proteomes" id="UP000000422">
    <property type="component" value="Chromosome"/>
</dbReference>
<dbReference type="GO" id="GO:0042597">
    <property type="term" value="C:periplasmic space"/>
    <property type="evidence" value="ECO:0007669"/>
    <property type="project" value="UniProtKB-SubCell"/>
</dbReference>
<dbReference type="GO" id="GO:0051301">
    <property type="term" value="P:cell division"/>
    <property type="evidence" value="ECO:0007669"/>
    <property type="project" value="UniProtKB-KW"/>
</dbReference>
<dbReference type="GO" id="GO:0017038">
    <property type="term" value="P:protein import"/>
    <property type="evidence" value="ECO:0007669"/>
    <property type="project" value="InterPro"/>
</dbReference>
<dbReference type="Gene3D" id="2.120.10.30">
    <property type="entry name" value="TolB, C-terminal domain"/>
    <property type="match status" value="1"/>
</dbReference>
<dbReference type="HAMAP" id="MF_00671">
    <property type="entry name" value="TolB"/>
    <property type="match status" value="1"/>
</dbReference>
<dbReference type="InterPro" id="IPR011042">
    <property type="entry name" value="6-blade_b-propeller_TolB-like"/>
</dbReference>
<dbReference type="InterPro" id="IPR014167">
    <property type="entry name" value="Tol-Pal_TolB"/>
</dbReference>
<dbReference type="InterPro" id="IPR007195">
    <property type="entry name" value="TolB_N"/>
</dbReference>
<dbReference type="NCBIfam" id="NF003124">
    <property type="entry name" value="PRK04043.1"/>
    <property type="match status" value="1"/>
</dbReference>
<dbReference type="PANTHER" id="PTHR36842:SF1">
    <property type="entry name" value="PROTEIN TOLB"/>
    <property type="match status" value="1"/>
</dbReference>
<dbReference type="PANTHER" id="PTHR36842">
    <property type="entry name" value="PROTEIN TOLB HOMOLOG"/>
    <property type="match status" value="1"/>
</dbReference>
<dbReference type="Pfam" id="PF04052">
    <property type="entry name" value="TolB_N"/>
    <property type="match status" value="1"/>
</dbReference>
<dbReference type="SUPFAM" id="SSF69304">
    <property type="entry name" value="Tricorn protease N-terminal domain"/>
    <property type="match status" value="1"/>
</dbReference>
<name>TOLB_WOLSU</name>
<proteinExistence type="inferred from homology"/>
<keyword id="KW-0131">Cell cycle</keyword>
<keyword id="KW-0132">Cell division</keyword>
<keyword id="KW-0574">Periplasm</keyword>
<keyword id="KW-1185">Reference proteome</keyword>
<keyword id="KW-0732">Signal</keyword>
<feature type="signal peptide" evidence="1">
    <location>
        <begin position="1"/>
        <end position="16"/>
    </location>
</feature>
<feature type="chain" id="PRO_0000034696" description="Tol-Pal system protein TolB" evidence="1">
    <location>
        <begin position="17"/>
        <end position="421"/>
    </location>
</feature>